<sequence>MSGFNFGGTGAPTGGFTFGTAKTATTTPATGFSFSTSGTGGFNFGAPFQPATSTPSTGLFSLATQTPATQTTGFTFGTATLASGGTGFSLGIGASKLNLSNTAATPAMANPSGFGLGSSNLTNAISSTVTSSQGTAPTGFVFGPSTTSVAPATTSGGFSFTGGSTAQPSGFNIGSAGNSAQPTAPATLPFTPATPAATTAGATQPAAPTPTATITSTGPSLFASIATAPTSSATTGLSLCTPVTTAGAPTAGTQGFSLKAPGAASGTSTTTSTAATATATTTSSSSTTGFALNLKPLAPAGIPSNTAAAVTAPPGPGAAAGAAASSAMTYAQLESLINKWSLELEDQERHFLQQATQVNAWDRTLIENGEKITSLHREVEKVKLDQKRLDQELDFILSQQKELEDLLSPLEELVKEQSGTIYLQHADEEREKTYKLAENIDAQLKRMAQDLKDIIEHLNTSGAPADTSDPLQQICKILNAHMDSLQWIDQNSALLQRKVEEVTKVCEGRRKEQERSFRITFD</sequence>
<protein>
    <recommendedName>
        <fullName>Nuclear pore glycoprotein p62</fullName>
    </recommendedName>
    <alternativeName>
        <fullName>62 kDa nucleoporin</fullName>
    </alternativeName>
    <alternativeName>
        <fullName>Nucleoporin Nup62</fullName>
    </alternativeName>
</protein>
<reference key="1">
    <citation type="journal article" date="1991" name="Eur. J. Cell Biol.">
        <title>Human nucleoporin p62 and the essential yeast nuclear pore protein NSP1 show sequence homology and a similar domain organization.</title>
        <authorList>
            <person name="Carmo-Fonseca M."/>
            <person name="Kern H."/>
            <person name="Hurt E.C."/>
        </authorList>
    </citation>
    <scope>NUCLEOTIDE SEQUENCE [MRNA]</scope>
    <scope>FUNCTION</scope>
    <scope>SUBCELLULAR LOCATION</scope>
    <scope>VARIANT THR-283</scope>
</reference>
<reference key="2">
    <citation type="journal article" date="2007" name="BMC Genomics">
        <title>The full-ORF clone resource of the German cDNA consortium.</title>
        <authorList>
            <person name="Bechtel S."/>
            <person name="Rosenfelder H."/>
            <person name="Duda A."/>
            <person name="Schmidt C.P."/>
            <person name="Ernst U."/>
            <person name="Wellenreuther R."/>
            <person name="Mehrle A."/>
            <person name="Schuster C."/>
            <person name="Bahr A."/>
            <person name="Bloecker H."/>
            <person name="Heubner D."/>
            <person name="Hoerlein A."/>
            <person name="Michel G."/>
            <person name="Wedler H."/>
            <person name="Koehrer K."/>
            <person name="Ottenwaelder B."/>
            <person name="Poustka A."/>
            <person name="Wiemann S."/>
            <person name="Schupp I."/>
        </authorList>
    </citation>
    <scope>NUCLEOTIDE SEQUENCE [LARGE SCALE MRNA]</scope>
    <scope>VARIANT THR-283</scope>
    <source>
        <tissue>Brain</tissue>
    </source>
</reference>
<reference key="3">
    <citation type="journal article" date="2004" name="Nat. Genet.">
        <title>Complete sequencing and characterization of 21,243 full-length human cDNAs.</title>
        <authorList>
            <person name="Ota T."/>
            <person name="Suzuki Y."/>
            <person name="Nishikawa T."/>
            <person name="Otsuki T."/>
            <person name="Sugiyama T."/>
            <person name="Irie R."/>
            <person name="Wakamatsu A."/>
            <person name="Hayashi K."/>
            <person name="Sato H."/>
            <person name="Nagai K."/>
            <person name="Kimura K."/>
            <person name="Makita H."/>
            <person name="Sekine M."/>
            <person name="Obayashi M."/>
            <person name="Nishi T."/>
            <person name="Shibahara T."/>
            <person name="Tanaka T."/>
            <person name="Ishii S."/>
            <person name="Yamamoto J."/>
            <person name="Saito K."/>
            <person name="Kawai Y."/>
            <person name="Isono Y."/>
            <person name="Nakamura Y."/>
            <person name="Nagahari K."/>
            <person name="Murakami K."/>
            <person name="Yasuda T."/>
            <person name="Iwayanagi T."/>
            <person name="Wagatsuma M."/>
            <person name="Shiratori A."/>
            <person name="Sudo H."/>
            <person name="Hosoiri T."/>
            <person name="Kaku Y."/>
            <person name="Kodaira H."/>
            <person name="Kondo H."/>
            <person name="Sugawara M."/>
            <person name="Takahashi M."/>
            <person name="Kanda K."/>
            <person name="Yokoi T."/>
            <person name="Furuya T."/>
            <person name="Kikkawa E."/>
            <person name="Omura Y."/>
            <person name="Abe K."/>
            <person name="Kamihara K."/>
            <person name="Katsuta N."/>
            <person name="Sato K."/>
            <person name="Tanikawa M."/>
            <person name="Yamazaki M."/>
            <person name="Ninomiya K."/>
            <person name="Ishibashi T."/>
            <person name="Yamashita H."/>
            <person name="Murakawa K."/>
            <person name="Fujimori K."/>
            <person name="Tanai H."/>
            <person name="Kimata M."/>
            <person name="Watanabe M."/>
            <person name="Hiraoka S."/>
            <person name="Chiba Y."/>
            <person name="Ishida S."/>
            <person name="Ono Y."/>
            <person name="Takiguchi S."/>
            <person name="Watanabe S."/>
            <person name="Yosida M."/>
            <person name="Hotuta T."/>
            <person name="Kusano J."/>
            <person name="Kanehori K."/>
            <person name="Takahashi-Fujii A."/>
            <person name="Hara H."/>
            <person name="Tanase T.-O."/>
            <person name="Nomura Y."/>
            <person name="Togiya S."/>
            <person name="Komai F."/>
            <person name="Hara R."/>
            <person name="Takeuchi K."/>
            <person name="Arita M."/>
            <person name="Imose N."/>
            <person name="Musashino K."/>
            <person name="Yuuki H."/>
            <person name="Oshima A."/>
            <person name="Sasaki N."/>
            <person name="Aotsuka S."/>
            <person name="Yoshikawa Y."/>
            <person name="Matsunawa H."/>
            <person name="Ichihara T."/>
            <person name="Shiohata N."/>
            <person name="Sano S."/>
            <person name="Moriya S."/>
            <person name="Momiyama H."/>
            <person name="Satoh N."/>
            <person name="Takami S."/>
            <person name="Terashima Y."/>
            <person name="Suzuki O."/>
            <person name="Nakagawa S."/>
            <person name="Senoh A."/>
            <person name="Mizoguchi H."/>
            <person name="Goto Y."/>
            <person name="Shimizu F."/>
            <person name="Wakebe H."/>
            <person name="Hishigaki H."/>
            <person name="Watanabe T."/>
            <person name="Sugiyama A."/>
            <person name="Takemoto M."/>
            <person name="Kawakami B."/>
            <person name="Yamazaki M."/>
            <person name="Watanabe K."/>
            <person name="Kumagai A."/>
            <person name="Itakura S."/>
            <person name="Fukuzumi Y."/>
            <person name="Fujimori Y."/>
            <person name="Komiyama M."/>
            <person name="Tashiro H."/>
            <person name="Tanigami A."/>
            <person name="Fujiwara T."/>
            <person name="Ono T."/>
            <person name="Yamada K."/>
            <person name="Fujii Y."/>
            <person name="Ozaki K."/>
            <person name="Hirao M."/>
            <person name="Ohmori Y."/>
            <person name="Kawabata A."/>
            <person name="Hikiji T."/>
            <person name="Kobatake N."/>
            <person name="Inagaki H."/>
            <person name="Ikema Y."/>
            <person name="Okamoto S."/>
            <person name="Okitani R."/>
            <person name="Kawakami T."/>
            <person name="Noguchi S."/>
            <person name="Itoh T."/>
            <person name="Shigeta K."/>
            <person name="Senba T."/>
            <person name="Matsumura K."/>
            <person name="Nakajima Y."/>
            <person name="Mizuno T."/>
            <person name="Morinaga M."/>
            <person name="Sasaki M."/>
            <person name="Togashi T."/>
            <person name="Oyama M."/>
            <person name="Hata H."/>
            <person name="Watanabe M."/>
            <person name="Komatsu T."/>
            <person name="Mizushima-Sugano J."/>
            <person name="Satoh T."/>
            <person name="Shirai Y."/>
            <person name="Takahashi Y."/>
            <person name="Nakagawa K."/>
            <person name="Okumura K."/>
            <person name="Nagase T."/>
            <person name="Nomura N."/>
            <person name="Kikuchi H."/>
            <person name="Masuho Y."/>
            <person name="Yamashita R."/>
            <person name="Nakai K."/>
            <person name="Yada T."/>
            <person name="Nakamura Y."/>
            <person name="Ohara O."/>
            <person name="Isogai T."/>
            <person name="Sugano S."/>
        </authorList>
    </citation>
    <scope>NUCLEOTIDE SEQUENCE [LARGE SCALE MRNA]</scope>
    <source>
        <tissue>Testis</tissue>
    </source>
</reference>
<reference key="4">
    <citation type="submission" date="2004-06" db="EMBL/GenBank/DDBJ databases">
        <title>Cloning of human full open reading frames in Gateway(TM) system entry vector (pDONR201).</title>
        <authorList>
            <person name="Halleck A."/>
            <person name="Ebert L."/>
            <person name="Mkoundinya M."/>
            <person name="Schick M."/>
            <person name="Eisenstein S."/>
            <person name="Neubert P."/>
            <person name="Kstrang K."/>
            <person name="Schatten R."/>
            <person name="Shen B."/>
            <person name="Henze S."/>
            <person name="Mar W."/>
            <person name="Korn B."/>
            <person name="Zuo D."/>
            <person name="Hu Y."/>
            <person name="LaBaer J."/>
        </authorList>
    </citation>
    <scope>NUCLEOTIDE SEQUENCE [LARGE SCALE MRNA]</scope>
</reference>
<reference key="5">
    <citation type="journal article" date="2004" name="Nature">
        <title>The DNA sequence and biology of human chromosome 19.</title>
        <authorList>
            <person name="Grimwood J."/>
            <person name="Gordon L.A."/>
            <person name="Olsen A.S."/>
            <person name="Terry A."/>
            <person name="Schmutz J."/>
            <person name="Lamerdin J.E."/>
            <person name="Hellsten U."/>
            <person name="Goodstein D."/>
            <person name="Couronne O."/>
            <person name="Tran-Gyamfi M."/>
            <person name="Aerts A."/>
            <person name="Altherr M."/>
            <person name="Ashworth L."/>
            <person name="Bajorek E."/>
            <person name="Black S."/>
            <person name="Branscomb E."/>
            <person name="Caenepeel S."/>
            <person name="Carrano A.V."/>
            <person name="Caoile C."/>
            <person name="Chan Y.M."/>
            <person name="Christensen M."/>
            <person name="Cleland C.A."/>
            <person name="Copeland A."/>
            <person name="Dalin E."/>
            <person name="Dehal P."/>
            <person name="Denys M."/>
            <person name="Detter J.C."/>
            <person name="Escobar J."/>
            <person name="Flowers D."/>
            <person name="Fotopulos D."/>
            <person name="Garcia C."/>
            <person name="Georgescu A.M."/>
            <person name="Glavina T."/>
            <person name="Gomez M."/>
            <person name="Gonzales E."/>
            <person name="Groza M."/>
            <person name="Hammon N."/>
            <person name="Hawkins T."/>
            <person name="Haydu L."/>
            <person name="Ho I."/>
            <person name="Huang W."/>
            <person name="Israni S."/>
            <person name="Jett J."/>
            <person name="Kadner K."/>
            <person name="Kimball H."/>
            <person name="Kobayashi A."/>
            <person name="Larionov V."/>
            <person name="Leem S.-H."/>
            <person name="Lopez F."/>
            <person name="Lou Y."/>
            <person name="Lowry S."/>
            <person name="Malfatti S."/>
            <person name="Martinez D."/>
            <person name="McCready P.M."/>
            <person name="Medina C."/>
            <person name="Morgan J."/>
            <person name="Nelson K."/>
            <person name="Nolan M."/>
            <person name="Ovcharenko I."/>
            <person name="Pitluck S."/>
            <person name="Pollard M."/>
            <person name="Popkie A.P."/>
            <person name="Predki P."/>
            <person name="Quan G."/>
            <person name="Ramirez L."/>
            <person name="Rash S."/>
            <person name="Retterer J."/>
            <person name="Rodriguez A."/>
            <person name="Rogers S."/>
            <person name="Salamov A."/>
            <person name="Salazar A."/>
            <person name="She X."/>
            <person name="Smith D."/>
            <person name="Slezak T."/>
            <person name="Solovyev V."/>
            <person name="Thayer N."/>
            <person name="Tice H."/>
            <person name="Tsai M."/>
            <person name="Ustaszewska A."/>
            <person name="Vo N."/>
            <person name="Wagner M."/>
            <person name="Wheeler J."/>
            <person name="Wu K."/>
            <person name="Xie G."/>
            <person name="Yang J."/>
            <person name="Dubchak I."/>
            <person name="Furey T.S."/>
            <person name="DeJong P."/>
            <person name="Dickson M."/>
            <person name="Gordon D."/>
            <person name="Eichler E.E."/>
            <person name="Pennacchio L.A."/>
            <person name="Richardson P."/>
            <person name="Stubbs L."/>
            <person name="Rokhsar D.S."/>
            <person name="Myers R.M."/>
            <person name="Rubin E.M."/>
            <person name="Lucas S.M."/>
        </authorList>
    </citation>
    <scope>NUCLEOTIDE SEQUENCE [LARGE SCALE GENOMIC DNA]</scope>
</reference>
<reference key="6">
    <citation type="submission" date="2005-07" db="EMBL/GenBank/DDBJ databases">
        <authorList>
            <person name="Mural R.J."/>
            <person name="Istrail S."/>
            <person name="Sutton G.G."/>
            <person name="Florea L."/>
            <person name="Halpern A.L."/>
            <person name="Mobarry C.M."/>
            <person name="Lippert R."/>
            <person name="Walenz B."/>
            <person name="Shatkay H."/>
            <person name="Dew I."/>
            <person name="Miller J.R."/>
            <person name="Flanigan M.J."/>
            <person name="Edwards N.J."/>
            <person name="Bolanos R."/>
            <person name="Fasulo D."/>
            <person name="Halldorsson B.V."/>
            <person name="Hannenhalli S."/>
            <person name="Turner R."/>
            <person name="Yooseph S."/>
            <person name="Lu F."/>
            <person name="Nusskern D.R."/>
            <person name="Shue B.C."/>
            <person name="Zheng X.H."/>
            <person name="Zhong F."/>
            <person name="Delcher A.L."/>
            <person name="Huson D.H."/>
            <person name="Kravitz S.A."/>
            <person name="Mouchard L."/>
            <person name="Reinert K."/>
            <person name="Remington K.A."/>
            <person name="Clark A.G."/>
            <person name="Waterman M.S."/>
            <person name="Eichler E.E."/>
            <person name="Adams M.D."/>
            <person name="Hunkapiller M.W."/>
            <person name="Myers E.W."/>
            <person name="Venter J.C."/>
        </authorList>
    </citation>
    <scope>NUCLEOTIDE SEQUENCE [LARGE SCALE GENOMIC DNA]</scope>
</reference>
<reference key="7">
    <citation type="journal article" date="2004" name="Genome Res.">
        <title>The status, quality, and expansion of the NIH full-length cDNA project: the Mammalian Gene Collection (MGC).</title>
        <authorList>
            <consortium name="The MGC Project Team"/>
        </authorList>
    </citation>
    <scope>NUCLEOTIDE SEQUENCE [LARGE SCALE MRNA]</scope>
    <scope>VARIANT THR-283</scope>
    <source>
        <tissue>Pancreas</tissue>
        <tissue>Skin</tissue>
        <tissue>Urinary bladder</tissue>
    </source>
</reference>
<reference key="8">
    <citation type="journal article" date="2003" name="Nature">
        <title>Proteomic characterization of the human centrosome by protein correlation profiling.</title>
        <authorList>
            <person name="Andersen J.S."/>
            <person name="Wilkinson C.J."/>
            <person name="Mayor T."/>
            <person name="Mortensen P."/>
            <person name="Nigg E.A."/>
            <person name="Mann M."/>
        </authorList>
    </citation>
    <scope>IDENTIFICATION BY MASS SPECTROMETRY</scope>
    <scope>SUBCELLULAR LOCATION [LARGE SCALE ANALYSIS]</scope>
    <source>
        <tissue>Lymphoblast</tissue>
    </source>
</reference>
<reference key="9">
    <citation type="journal article" date="2008" name="Traffic">
        <title>A new role for nuclear transport factor 2 and Ran: nuclear import of CapG.</title>
        <authorList>
            <person name="Van Impe K."/>
            <person name="Hubert T."/>
            <person name="De Corte V."/>
            <person name="Vanloo B."/>
            <person name="Boucherie C."/>
            <person name="Vandekerckhove J."/>
            <person name="Gettemans J."/>
        </authorList>
    </citation>
    <scope>INTERACTION WITH CAPG</scope>
</reference>
<reference key="10">
    <citation type="journal article" date="2009" name="Anal. Chem.">
        <title>Lys-N and trypsin cover complementary parts of the phosphoproteome in a refined SCX-based approach.</title>
        <authorList>
            <person name="Gauci S."/>
            <person name="Helbig A.O."/>
            <person name="Slijper M."/>
            <person name="Krijgsveld J."/>
            <person name="Heck A.J."/>
            <person name="Mohammed S."/>
        </authorList>
    </citation>
    <scope>ACETYLATION [LARGE SCALE ANALYSIS] AT SER-2</scope>
    <scope>CLEAVAGE OF INITIATOR METHIONINE [LARGE SCALE ANALYSIS]</scope>
    <scope>IDENTIFICATION BY MASS SPECTROMETRY [LARGE SCALE ANALYSIS]</scope>
</reference>
<reference key="11">
    <citation type="journal article" date="2009" name="Sci. Signal.">
        <title>Quantitative phosphoproteomic analysis of T cell receptor signaling reveals system-wide modulation of protein-protein interactions.</title>
        <authorList>
            <person name="Mayya V."/>
            <person name="Lundgren D.H."/>
            <person name="Hwang S.-I."/>
            <person name="Rezaul K."/>
            <person name="Wu L."/>
            <person name="Eng J.K."/>
            <person name="Rodionov V."/>
            <person name="Han D.K."/>
        </authorList>
    </citation>
    <scope>PHOSPHORYLATION [LARGE SCALE ANALYSIS] AT SER-408</scope>
    <scope>IDENTIFICATION BY MASS SPECTROMETRY [LARGE SCALE ANALYSIS]</scope>
    <source>
        <tissue>Leukemic T-cell</tissue>
    </source>
</reference>
<reference key="12">
    <citation type="journal article" date="2010" name="Sci. Signal.">
        <title>Quantitative phosphoproteomics reveals widespread full phosphorylation site occupancy during mitosis.</title>
        <authorList>
            <person name="Olsen J.V."/>
            <person name="Vermeulen M."/>
            <person name="Santamaria A."/>
            <person name="Kumar C."/>
            <person name="Miller M.L."/>
            <person name="Jensen L.J."/>
            <person name="Gnad F."/>
            <person name="Cox J."/>
            <person name="Jensen T.S."/>
            <person name="Nigg E.A."/>
            <person name="Brunak S."/>
            <person name="Mann M."/>
        </authorList>
    </citation>
    <scope>PHOSPHORYLATION [LARGE SCALE ANALYSIS] AT SER-408</scope>
    <scope>IDENTIFICATION BY MASS SPECTROMETRY [LARGE SCALE ANALYSIS]</scope>
    <source>
        <tissue>Cervix carcinoma</tissue>
    </source>
</reference>
<reference key="13">
    <citation type="journal article" date="2011" name="BMC Syst. Biol.">
        <title>Initial characterization of the human central proteome.</title>
        <authorList>
            <person name="Burkard T.R."/>
            <person name="Planyavsky M."/>
            <person name="Kaupe I."/>
            <person name="Breitwieser F.P."/>
            <person name="Buerckstuemmer T."/>
            <person name="Bennett K.L."/>
            <person name="Superti-Furga G."/>
            <person name="Colinge J."/>
        </authorList>
    </citation>
    <scope>IDENTIFICATION BY MASS SPECTROMETRY [LARGE SCALE ANALYSIS]</scope>
</reference>
<reference key="14">
    <citation type="journal article" date="2011" name="PLoS ONE">
        <title>OSBP-related protein 8 (ORP8) regulates plasma and liver tissue lipid levels and interacts with the nucleoporin Nup62.</title>
        <authorList>
            <person name="Zhou T."/>
            <person name="Li S."/>
            <person name="Zhong W."/>
            <person name="Vihervaara T."/>
            <person name="Beaslas O."/>
            <person name="Perttila J."/>
            <person name="Luo W."/>
            <person name="Jiang Y."/>
            <person name="Lehto M."/>
            <person name="Olkkonen V.M."/>
            <person name="Yan D."/>
        </authorList>
    </citation>
    <scope>INTERACTION WITH OSBPL8</scope>
</reference>
<reference key="15">
    <citation type="journal article" date="2012" name="Cell">
        <title>Hikeshi, a nuclear import carrier for hsp70s, protects cells from heat shock-induced nuclear damage.</title>
        <authorList>
            <person name="Kose S."/>
            <person name="Furuta M."/>
            <person name="Imamoto N."/>
        </authorList>
    </citation>
    <scope>INTERACTION WITH HIKESHI</scope>
</reference>
<reference key="16">
    <citation type="journal article" date="2012" name="J. Virol.">
        <title>Epstein-Barr virus protein kinase BGLF4 targets the nucleus through interaction with nucleoporins.</title>
        <authorList>
            <person name="Chang C.W."/>
            <person name="Lee C.P."/>
            <person name="Huang Y.H."/>
            <person name="Yang P.W."/>
            <person name="Wang J.T."/>
            <person name="Chen M.R."/>
        </authorList>
    </citation>
    <scope>INTERACTION WITH EPSTEIN-BARR VIRUS BGLF4</scope>
</reference>
<reference key="17">
    <citation type="journal article" date="2012" name="Mol. Cell. Proteomics">
        <title>Comparative large-scale characterisation of plant vs. mammal proteins reveals similar and idiosyncratic N-alpha acetylation features.</title>
        <authorList>
            <person name="Bienvenut W.V."/>
            <person name="Sumpton D."/>
            <person name="Martinez A."/>
            <person name="Lilla S."/>
            <person name="Espagne C."/>
            <person name="Meinnel T."/>
            <person name="Giglione C."/>
        </authorList>
    </citation>
    <scope>ACETYLATION [LARGE SCALE ANALYSIS] AT SER-2</scope>
    <scope>CLEAVAGE OF INITIATOR METHIONINE [LARGE SCALE ANALYSIS]</scope>
    <scope>IDENTIFICATION BY MASS SPECTROMETRY [LARGE SCALE ANALYSIS]</scope>
</reference>
<reference key="18">
    <citation type="journal article" date="2013" name="Cell Cycle">
        <title>Nucleoporin Nup62 maintains centrosome homeostasis.</title>
        <authorList>
            <person name="Hashizume C."/>
            <person name="Moyori A."/>
            <person name="Kobayashi A."/>
            <person name="Yamakoshi N."/>
            <person name="Endo A."/>
            <person name="Wong R.W."/>
        </authorList>
    </citation>
    <scope>FUNCTION</scope>
    <scope>INTERACTION WITH SAS6 AND TUBG1</scope>
    <scope>SUBCELLULAR LOCATION</scope>
</reference>
<reference key="19">
    <citation type="journal article" date="2013" name="J. Proteome Res.">
        <title>Toward a comprehensive characterization of a human cancer cell phosphoproteome.</title>
        <authorList>
            <person name="Zhou H."/>
            <person name="Di Palma S."/>
            <person name="Preisinger C."/>
            <person name="Peng M."/>
            <person name="Polat A.N."/>
            <person name="Heck A.J."/>
            <person name="Mohammed S."/>
        </authorList>
    </citation>
    <scope>PHOSPHORYLATION [LARGE SCALE ANALYSIS] AT SER-408 AND SER-418</scope>
    <scope>IDENTIFICATION BY MASS SPECTROMETRY [LARGE SCALE ANALYSIS]</scope>
    <source>
        <tissue>Erythroleukemia</tissue>
    </source>
</reference>
<reference key="20">
    <citation type="journal article" date="2013" name="Nat. Commun.">
        <title>GANP regulates recruitment of AID to immunoglobulin variable regions by modulating transcription and nucleosome occupancy.</title>
        <authorList>
            <person name="Singh S.K."/>
            <person name="Maeda K."/>
            <person name="Eid M.M."/>
            <person name="Almofty S.A."/>
            <person name="Ono M."/>
            <person name="Pham P."/>
            <person name="Goodman M.F."/>
            <person name="Sakaguchi N."/>
        </authorList>
    </citation>
    <scope>INTERACTION WITH MCM3AP</scope>
</reference>
<reference key="21">
    <citation type="journal article" date="2014" name="J. Proteomics">
        <title>An enzyme assisted RP-RPLC approach for in-depth analysis of human liver phosphoproteome.</title>
        <authorList>
            <person name="Bian Y."/>
            <person name="Song C."/>
            <person name="Cheng K."/>
            <person name="Dong M."/>
            <person name="Wang F."/>
            <person name="Huang J."/>
            <person name="Sun D."/>
            <person name="Wang L."/>
            <person name="Ye M."/>
            <person name="Zou H."/>
        </authorList>
    </citation>
    <scope>IDENTIFICATION BY MASS SPECTROMETRY [LARGE SCALE ANALYSIS]</scope>
    <source>
        <tissue>Liver</tissue>
    </source>
</reference>
<reference key="22">
    <citation type="journal article" date="2006" name="Ann. Neurol.">
        <title>Mutated nup62 causes autosomal recessive infantile bilateral striatal necrosis.</title>
        <authorList>
            <person name="Basel-Vanagaite L."/>
            <person name="Muncher L."/>
            <person name="Straussberg R."/>
            <person name="Pasmanik-Chor M."/>
            <person name="Yahav M."/>
            <person name="Rainshtein L."/>
            <person name="Walsh C.A."/>
            <person name="Magal N."/>
            <person name="Taub E."/>
            <person name="Drasinover V."/>
            <person name="Shalev H."/>
            <person name="Attia R."/>
            <person name="Rechavi G."/>
            <person name="Simon A.J."/>
            <person name="Shohat M."/>
        </authorList>
    </citation>
    <scope>INVOLVEMENT IN SNDI</scope>
    <scope>VARIANT SNDI PRO-391</scope>
</reference>
<reference key="23">
    <citation type="journal article" date="2018" name="PLoS Genet.">
        <title>Biallelic mutations in nucleoporin NUP88 cause lethal fetal akinesia deformation sequence.</title>
        <authorList>
            <person name="Bonnin E."/>
            <person name="Cabochette P."/>
            <person name="Filosa A."/>
            <person name="Juehlen R."/>
            <person name="Komatsuzaki S."/>
            <person name="Hezwani M."/>
            <person name="Dickmanns A."/>
            <person name="Martinelli V."/>
            <person name="Vermeersch M."/>
            <person name="Supply L."/>
            <person name="Martins N."/>
            <person name="Pirenne L."/>
            <person name="Ravenscroft G."/>
            <person name="Lombard M."/>
            <person name="Port S."/>
            <person name="Spillner C."/>
            <person name="Janssens S."/>
            <person name="Roets E."/>
            <person name="Van Dorpe J."/>
            <person name="Lammens M."/>
            <person name="Kehlenbach R.H."/>
            <person name="Ficner R."/>
            <person name="Laing N.G."/>
            <person name="Hoffmann K."/>
            <person name="Vanhollebeke B."/>
            <person name="Fahrenkrog B."/>
        </authorList>
    </citation>
    <scope>INTERACTION WITH NUP88</scope>
</reference>
<accession>P37198</accession>
<accession>B3KWU5</accession>
<accession>Q503A4</accession>
<accession>Q6GTM2</accession>
<accession>Q96C43</accession>
<accession>Q9NSL1</accession>
<organism>
    <name type="scientific">Homo sapiens</name>
    <name type="common">Human</name>
    <dbReference type="NCBI Taxonomy" id="9606"/>
    <lineage>
        <taxon>Eukaryota</taxon>
        <taxon>Metazoa</taxon>
        <taxon>Chordata</taxon>
        <taxon>Craniata</taxon>
        <taxon>Vertebrata</taxon>
        <taxon>Euteleostomi</taxon>
        <taxon>Mammalia</taxon>
        <taxon>Eutheria</taxon>
        <taxon>Euarchontoglires</taxon>
        <taxon>Primates</taxon>
        <taxon>Haplorrhini</taxon>
        <taxon>Catarrhini</taxon>
        <taxon>Hominidae</taxon>
        <taxon>Homo</taxon>
    </lineage>
</organism>
<dbReference type="EMBL" id="X58521">
    <property type="protein sequence ID" value="CAA41411.1"/>
    <property type="molecule type" value="mRNA"/>
</dbReference>
<dbReference type="EMBL" id="AL162061">
    <property type="protein sequence ID" value="CAB82399.1"/>
    <property type="molecule type" value="mRNA"/>
</dbReference>
<dbReference type="EMBL" id="AK125857">
    <property type="protein sequence ID" value="BAG54257.1"/>
    <property type="molecule type" value="mRNA"/>
</dbReference>
<dbReference type="EMBL" id="CR541721">
    <property type="protein sequence ID" value="CAG46522.1"/>
    <property type="molecule type" value="mRNA"/>
</dbReference>
<dbReference type="EMBL" id="AC011452">
    <property type="status" value="NOT_ANNOTATED_CDS"/>
    <property type="molecule type" value="Genomic_DNA"/>
</dbReference>
<dbReference type="EMBL" id="CH471177">
    <property type="protein sequence ID" value="EAW52576.1"/>
    <property type="molecule type" value="Genomic_DNA"/>
</dbReference>
<dbReference type="EMBL" id="BC003663">
    <property type="protein sequence ID" value="AAH03663.1"/>
    <property type="molecule type" value="mRNA"/>
</dbReference>
<dbReference type="EMBL" id="BC014842">
    <property type="protein sequence ID" value="AAH14842.1"/>
    <property type="molecule type" value="mRNA"/>
</dbReference>
<dbReference type="EMBL" id="BC050717">
    <property type="protein sequence ID" value="AAH50717.1"/>
    <property type="molecule type" value="mRNA"/>
</dbReference>
<dbReference type="EMBL" id="BC095410">
    <property type="protein sequence ID" value="AAH95410.1"/>
    <property type="molecule type" value="mRNA"/>
</dbReference>
<dbReference type="EMBL" id="BC101104">
    <property type="protein sequence ID" value="AAI01105.1"/>
    <property type="molecule type" value="mRNA"/>
</dbReference>
<dbReference type="EMBL" id="BC101105">
    <property type="protein sequence ID" value="AAI01106.1"/>
    <property type="molecule type" value="mRNA"/>
</dbReference>
<dbReference type="EMBL" id="BC101106">
    <property type="protein sequence ID" value="AAI01107.1"/>
    <property type="molecule type" value="mRNA"/>
</dbReference>
<dbReference type="EMBL" id="BC101107">
    <property type="protein sequence ID" value="AAI01108.1"/>
    <property type="molecule type" value="mRNA"/>
</dbReference>
<dbReference type="CCDS" id="CCDS12788.1"/>
<dbReference type="PIR" id="S41819">
    <property type="entry name" value="S41819"/>
</dbReference>
<dbReference type="RefSeq" id="NP_001180286.1">
    <property type="nucleotide sequence ID" value="NM_001193357.2"/>
</dbReference>
<dbReference type="RefSeq" id="NP_036478.2">
    <property type="nucleotide sequence ID" value="NM_012346.4"/>
</dbReference>
<dbReference type="RefSeq" id="NP_057637.2">
    <property type="nucleotide sequence ID" value="NM_016553.4"/>
</dbReference>
<dbReference type="RefSeq" id="NP_714940.1">
    <property type="nucleotide sequence ID" value="NM_153718.4"/>
</dbReference>
<dbReference type="RefSeq" id="NP_714941.1">
    <property type="nucleotide sequence ID" value="NM_153719.4"/>
</dbReference>
<dbReference type="PDB" id="5IJN">
    <property type="method" value="EM"/>
    <property type="resolution" value="21.40 A"/>
    <property type="chains" value="H/N/T/Z=1-522"/>
</dbReference>
<dbReference type="PDB" id="5IJO">
    <property type="method" value="EM"/>
    <property type="resolution" value="21.40 A"/>
    <property type="chains" value="H/N/T/Z=1-522"/>
</dbReference>
<dbReference type="PDB" id="7PER">
    <property type="method" value="EM"/>
    <property type="resolution" value="35.00 A"/>
    <property type="chains" value="H/N/T/Z=1-522"/>
</dbReference>
<dbReference type="PDB" id="7R5J">
    <property type="method" value="EM"/>
    <property type="resolution" value="50.00 A"/>
    <property type="chains" value="J0/J1/J2/J3/J4=1-522"/>
</dbReference>
<dbReference type="PDB" id="7R5K">
    <property type="method" value="EM"/>
    <property type="resolution" value="12.00 A"/>
    <property type="chains" value="J0/J1/J2/J3/J4=1-522"/>
</dbReference>
<dbReference type="PDBsum" id="5IJN"/>
<dbReference type="PDBsum" id="5IJO"/>
<dbReference type="PDBsum" id="7PER"/>
<dbReference type="PDBsum" id="7R5J"/>
<dbReference type="PDBsum" id="7R5K"/>
<dbReference type="EMDB" id="EMD-14321"/>
<dbReference type="EMDB" id="EMD-14322"/>
<dbReference type="SMR" id="P37198"/>
<dbReference type="BioGRID" id="117165">
    <property type="interactions" value="287"/>
</dbReference>
<dbReference type="ComplexPortal" id="CPX-873">
    <property type="entry name" value="Nuclear pore complex"/>
</dbReference>
<dbReference type="CORUM" id="P37198"/>
<dbReference type="DIP" id="DIP-29749N"/>
<dbReference type="FunCoup" id="P37198">
    <property type="interactions" value="1660"/>
</dbReference>
<dbReference type="IntAct" id="P37198">
    <property type="interactions" value="213"/>
</dbReference>
<dbReference type="MINT" id="P37198"/>
<dbReference type="STRING" id="9606.ENSP00000471191"/>
<dbReference type="TCDB" id="1.I.1.1.3">
    <property type="family name" value="the nuclear pore complex (npc) family"/>
</dbReference>
<dbReference type="CarbonylDB" id="P37198"/>
<dbReference type="GlyConnect" id="471">
    <property type="glycosylation" value="1 O-GlcNAc glycan"/>
</dbReference>
<dbReference type="GlyCosmos" id="P37198">
    <property type="glycosylation" value="89 sites, 2 glycans"/>
</dbReference>
<dbReference type="GlyGen" id="P37198">
    <property type="glycosylation" value="102 sites, 2 O-linked glycans (101 sites)"/>
</dbReference>
<dbReference type="iPTMnet" id="P37198"/>
<dbReference type="PhosphoSitePlus" id="P37198"/>
<dbReference type="SwissPalm" id="P37198"/>
<dbReference type="BioMuta" id="NUP62"/>
<dbReference type="DMDM" id="134047855"/>
<dbReference type="jPOST" id="P37198"/>
<dbReference type="MassIVE" id="P37198"/>
<dbReference type="PaxDb" id="9606-ENSP00000471191"/>
<dbReference type="PeptideAtlas" id="P37198"/>
<dbReference type="ProteomicsDB" id="55266"/>
<dbReference type="Pumba" id="P37198"/>
<dbReference type="Antibodypedia" id="1686">
    <property type="antibodies" value="373 antibodies from 38 providers"/>
</dbReference>
<dbReference type="DNASU" id="23636"/>
<dbReference type="Ensembl" id="ENST00000352066.8">
    <property type="protein sequence ID" value="ENSP00000305503.3"/>
    <property type="gene ID" value="ENSG00000213024.13"/>
</dbReference>
<dbReference type="Ensembl" id="ENST00000422090.2">
    <property type="protein sequence ID" value="ENSP00000407331.1"/>
    <property type="gene ID" value="ENSG00000213024.13"/>
</dbReference>
<dbReference type="Ensembl" id="ENST00000596217.1">
    <property type="protein sequence ID" value="ENSP00000471191.1"/>
    <property type="gene ID" value="ENSG00000213024.13"/>
</dbReference>
<dbReference type="Ensembl" id="ENST00000596437.6">
    <property type="protein sequence ID" value="ENSP00000468842.2"/>
    <property type="gene ID" value="ENSG00000213024.13"/>
</dbReference>
<dbReference type="Ensembl" id="ENST00000597029.6">
    <property type="protein sequence ID" value="ENSP00000473192.1"/>
    <property type="gene ID" value="ENSG00000213024.13"/>
</dbReference>
<dbReference type="Ensembl" id="ENST00000598301.2">
    <property type="protein sequence ID" value="ENSP00000515009.1"/>
    <property type="gene ID" value="ENSG00000213024.13"/>
</dbReference>
<dbReference type="Ensembl" id="ENST00000599560.6">
    <property type="protein sequence ID" value="ENSP00000515013.1"/>
    <property type="gene ID" value="ENSG00000213024.13"/>
</dbReference>
<dbReference type="Ensembl" id="ENST00000599788.2">
    <property type="protein sequence ID" value="ENSP00000468884.2"/>
    <property type="gene ID" value="ENSG00000213024.13"/>
</dbReference>
<dbReference type="Ensembl" id="ENST00000600583.6">
    <property type="protein sequence ID" value="ENSP00000515011.1"/>
    <property type="gene ID" value="ENSG00000213024.13"/>
</dbReference>
<dbReference type="Ensembl" id="ENST00000600935.2">
    <property type="protein sequence ID" value="ENSP00000468839.2"/>
    <property type="gene ID" value="ENSG00000213024.13"/>
</dbReference>
<dbReference type="Ensembl" id="ENST00000700473.1">
    <property type="protein sequence ID" value="ENSP00000515006.1"/>
    <property type="gene ID" value="ENSG00000213024.13"/>
</dbReference>
<dbReference type="Ensembl" id="ENST00000700474.1">
    <property type="protein sequence ID" value="ENSP00000515007.1"/>
    <property type="gene ID" value="ENSG00000213024.13"/>
</dbReference>
<dbReference type="Ensembl" id="ENST00000700475.1">
    <property type="protein sequence ID" value="ENSP00000515008.1"/>
    <property type="gene ID" value="ENSG00000213024.13"/>
</dbReference>
<dbReference type="Ensembl" id="ENST00000700476.1">
    <property type="protein sequence ID" value="ENSP00000515010.1"/>
    <property type="gene ID" value="ENSG00000213024.13"/>
</dbReference>
<dbReference type="Ensembl" id="ENST00000700477.1">
    <property type="protein sequence ID" value="ENSP00000515012.1"/>
    <property type="gene ID" value="ENSG00000213024.13"/>
</dbReference>
<dbReference type="Ensembl" id="ENST00000700478.1">
    <property type="protein sequence ID" value="ENSP00000515014.1"/>
    <property type="gene ID" value="ENSG00000213024.13"/>
</dbReference>
<dbReference type="GeneID" id="23636"/>
<dbReference type="KEGG" id="hsa:23636"/>
<dbReference type="MANE-Select" id="ENST00000352066.8">
    <property type="protein sequence ID" value="ENSP00000305503.3"/>
    <property type="RefSeq nucleotide sequence ID" value="NM_016553.5"/>
    <property type="RefSeq protein sequence ID" value="NP_057637.2"/>
</dbReference>
<dbReference type="UCSC" id="uc002pqy.5">
    <property type="organism name" value="human"/>
</dbReference>
<dbReference type="AGR" id="HGNC:8066"/>
<dbReference type="CTD" id="23636"/>
<dbReference type="DisGeNET" id="23636"/>
<dbReference type="GeneCards" id="NUP62"/>
<dbReference type="HGNC" id="HGNC:8066">
    <property type="gene designation" value="NUP62"/>
</dbReference>
<dbReference type="HPA" id="ENSG00000213024">
    <property type="expression patterns" value="Low tissue specificity"/>
</dbReference>
<dbReference type="MalaCards" id="NUP62"/>
<dbReference type="MIM" id="271930">
    <property type="type" value="phenotype"/>
</dbReference>
<dbReference type="MIM" id="605815">
    <property type="type" value="gene"/>
</dbReference>
<dbReference type="neXtProt" id="NX_P37198"/>
<dbReference type="OpenTargets" id="ENSG00000213024"/>
<dbReference type="Orphanet" id="225154">
    <property type="disease" value="Familial infantile bilateral striatal necrosis"/>
</dbReference>
<dbReference type="PharmGKB" id="PA31854"/>
<dbReference type="VEuPathDB" id="HostDB:ENSG00000213024"/>
<dbReference type="eggNOG" id="KOG2196">
    <property type="taxonomic scope" value="Eukaryota"/>
</dbReference>
<dbReference type="GeneTree" id="ENSGT00940000161737"/>
<dbReference type="InParanoid" id="P37198"/>
<dbReference type="OMA" id="EMMSKQV"/>
<dbReference type="OrthoDB" id="344345at2759"/>
<dbReference type="PAN-GO" id="P37198">
    <property type="GO annotations" value="5 GO annotations based on evolutionary models"/>
</dbReference>
<dbReference type="PhylomeDB" id="P37198"/>
<dbReference type="TreeFam" id="TF324795"/>
<dbReference type="PathwayCommons" id="P37198"/>
<dbReference type="Reactome" id="R-HSA-1169408">
    <property type="pathway name" value="ISG15 antiviral mechanism"/>
</dbReference>
<dbReference type="Reactome" id="R-HSA-159227">
    <property type="pathway name" value="Transport of the SLBP independent Mature mRNA"/>
</dbReference>
<dbReference type="Reactome" id="R-HSA-159230">
    <property type="pathway name" value="Transport of the SLBP Dependant Mature mRNA"/>
</dbReference>
<dbReference type="Reactome" id="R-HSA-159231">
    <property type="pathway name" value="Transport of Mature mRNA Derived from an Intronless Transcript"/>
</dbReference>
<dbReference type="Reactome" id="R-HSA-159236">
    <property type="pathway name" value="Transport of Mature mRNA derived from an Intron-Containing Transcript"/>
</dbReference>
<dbReference type="Reactome" id="R-HSA-165054">
    <property type="pathway name" value="Rev-mediated nuclear export of HIV RNA"/>
</dbReference>
<dbReference type="Reactome" id="R-HSA-168271">
    <property type="pathway name" value="Transport of Ribonucleoproteins into the Host Nucleus"/>
</dbReference>
<dbReference type="Reactome" id="R-HSA-168276">
    <property type="pathway name" value="NS1 Mediated Effects on Host Pathways"/>
</dbReference>
<dbReference type="Reactome" id="R-HSA-168325">
    <property type="pathway name" value="Viral Messenger RNA Synthesis"/>
</dbReference>
<dbReference type="Reactome" id="R-HSA-168333">
    <property type="pathway name" value="NEP/NS2 Interacts with the Cellular Export Machinery"/>
</dbReference>
<dbReference type="Reactome" id="R-HSA-170822">
    <property type="pathway name" value="Regulation of Glucokinase by Glucokinase Regulatory Protein"/>
</dbReference>
<dbReference type="Reactome" id="R-HSA-180746">
    <property type="pathway name" value="Nuclear import of Rev protein"/>
</dbReference>
<dbReference type="Reactome" id="R-HSA-180910">
    <property type="pathway name" value="Vpr-mediated nuclear import of PICs"/>
</dbReference>
<dbReference type="Reactome" id="R-HSA-191859">
    <property type="pathway name" value="snRNP Assembly"/>
</dbReference>
<dbReference type="Reactome" id="R-HSA-3108214">
    <property type="pathway name" value="SUMOylation of DNA damage response and repair proteins"/>
</dbReference>
<dbReference type="Reactome" id="R-HSA-3232142">
    <property type="pathway name" value="SUMOylation of ubiquitinylation proteins"/>
</dbReference>
<dbReference type="Reactome" id="R-HSA-3301854">
    <property type="pathway name" value="Nuclear Pore Complex (NPC) Disassembly"/>
</dbReference>
<dbReference type="Reactome" id="R-HSA-3371453">
    <property type="pathway name" value="Regulation of HSF1-mediated heat shock response"/>
</dbReference>
<dbReference type="Reactome" id="R-HSA-4085377">
    <property type="pathway name" value="SUMOylation of SUMOylation proteins"/>
</dbReference>
<dbReference type="Reactome" id="R-HSA-4551638">
    <property type="pathway name" value="SUMOylation of chromatin organization proteins"/>
</dbReference>
<dbReference type="Reactome" id="R-HSA-4570464">
    <property type="pathway name" value="SUMOylation of RNA binding proteins"/>
</dbReference>
<dbReference type="Reactome" id="R-HSA-4615885">
    <property type="pathway name" value="SUMOylation of DNA replication proteins"/>
</dbReference>
<dbReference type="Reactome" id="R-HSA-5578749">
    <property type="pathway name" value="Transcriptional regulation by small RNAs"/>
</dbReference>
<dbReference type="Reactome" id="R-HSA-5619107">
    <property type="pathway name" value="Defective TPR may confer susceptibility towards thyroid papillary carcinoma (TPC)"/>
</dbReference>
<dbReference type="Reactome" id="R-HSA-6784531">
    <property type="pathway name" value="tRNA processing in the nucleus"/>
</dbReference>
<dbReference type="Reactome" id="R-HSA-9609690">
    <property type="pathway name" value="HCMV Early Events"/>
</dbReference>
<dbReference type="Reactome" id="R-HSA-9610379">
    <property type="pathway name" value="HCMV Late Events"/>
</dbReference>
<dbReference type="Reactome" id="R-HSA-9615933">
    <property type="pathway name" value="Postmitotic nuclear pore complex (NPC) reformation"/>
</dbReference>
<dbReference type="Reactome" id="R-HSA-9705671">
    <property type="pathway name" value="SARS-CoV-2 activates/modulates innate and adaptive immune responses"/>
</dbReference>
<dbReference type="SignaLink" id="P37198"/>
<dbReference type="SIGNOR" id="P37198"/>
<dbReference type="BioGRID-ORCS" id="23636">
    <property type="hits" value="654 hits in 1167 CRISPR screens"/>
</dbReference>
<dbReference type="GeneWiki" id="Nucleoporin_62"/>
<dbReference type="GenomeRNAi" id="23636"/>
<dbReference type="Pharos" id="P37198">
    <property type="development level" value="Tbio"/>
</dbReference>
<dbReference type="PRO" id="PR:P37198"/>
<dbReference type="Proteomes" id="UP000005640">
    <property type="component" value="Chromosome 19"/>
</dbReference>
<dbReference type="RNAct" id="P37198">
    <property type="molecule type" value="protein"/>
</dbReference>
<dbReference type="Bgee" id="ENSG00000213024">
    <property type="expression patterns" value="Expressed in right testis and 199 other cell types or tissues"/>
</dbReference>
<dbReference type="ExpressionAtlas" id="P37198">
    <property type="expression patterns" value="baseline and differential"/>
</dbReference>
<dbReference type="GO" id="GO:0005813">
    <property type="term" value="C:centrosome"/>
    <property type="evidence" value="ECO:0000314"/>
    <property type="project" value="UniProtKB"/>
</dbReference>
<dbReference type="GO" id="GO:0005737">
    <property type="term" value="C:cytoplasm"/>
    <property type="evidence" value="ECO:0000314"/>
    <property type="project" value="UniProtKB"/>
</dbReference>
<dbReference type="GO" id="GO:0090543">
    <property type="term" value="C:Flemming body"/>
    <property type="evidence" value="ECO:0000314"/>
    <property type="project" value="UniProtKB"/>
</dbReference>
<dbReference type="GO" id="GO:0072686">
    <property type="term" value="C:mitotic spindle"/>
    <property type="evidence" value="ECO:0000314"/>
    <property type="project" value="UniProtKB"/>
</dbReference>
<dbReference type="GO" id="GO:0005635">
    <property type="term" value="C:nuclear envelope"/>
    <property type="evidence" value="ECO:0000314"/>
    <property type="project" value="UniProtKB"/>
</dbReference>
<dbReference type="GO" id="GO:0031965">
    <property type="term" value="C:nuclear membrane"/>
    <property type="evidence" value="ECO:0000314"/>
    <property type="project" value="HPA"/>
</dbReference>
<dbReference type="GO" id="GO:0005643">
    <property type="term" value="C:nuclear pore"/>
    <property type="evidence" value="ECO:0000314"/>
    <property type="project" value="UniProtKB"/>
</dbReference>
<dbReference type="GO" id="GO:0044613">
    <property type="term" value="C:nuclear pore central transport channel"/>
    <property type="evidence" value="ECO:0000318"/>
    <property type="project" value="GO_Central"/>
</dbReference>
<dbReference type="GO" id="GO:0005654">
    <property type="term" value="C:nucleoplasm"/>
    <property type="evidence" value="ECO:0000314"/>
    <property type="project" value="HPA"/>
</dbReference>
<dbReference type="GO" id="GO:1990904">
    <property type="term" value="C:ribonucleoprotein complex"/>
    <property type="evidence" value="ECO:0000314"/>
    <property type="project" value="MGI"/>
</dbReference>
<dbReference type="GO" id="GO:0000922">
    <property type="term" value="C:spindle pole"/>
    <property type="evidence" value="ECO:0000314"/>
    <property type="project" value="UniProtKB"/>
</dbReference>
<dbReference type="GO" id="GO:0003682">
    <property type="term" value="F:chromatin binding"/>
    <property type="evidence" value="ECO:0000303"/>
    <property type="project" value="UniProtKB"/>
</dbReference>
<dbReference type="GO" id="GO:0030544">
    <property type="term" value="F:Hsp70 protein binding"/>
    <property type="evidence" value="ECO:0007669"/>
    <property type="project" value="Ensembl"/>
</dbReference>
<dbReference type="GO" id="GO:0051879">
    <property type="term" value="F:Hsp90 protein binding"/>
    <property type="evidence" value="ECO:0007669"/>
    <property type="project" value="Ensembl"/>
</dbReference>
<dbReference type="GO" id="GO:0005543">
    <property type="term" value="F:phospholipid binding"/>
    <property type="evidence" value="ECO:0000318"/>
    <property type="project" value="GO_Central"/>
</dbReference>
<dbReference type="GO" id="GO:0051425">
    <property type="term" value="F:PTB domain binding"/>
    <property type="evidence" value="ECO:0007669"/>
    <property type="project" value="Ensembl"/>
</dbReference>
<dbReference type="GO" id="GO:0042169">
    <property type="term" value="F:SH2 domain binding"/>
    <property type="evidence" value="ECO:0000314"/>
    <property type="project" value="UniProtKB"/>
</dbReference>
<dbReference type="GO" id="GO:0030159">
    <property type="term" value="F:signaling receptor complex adaptor activity"/>
    <property type="evidence" value="ECO:0000314"/>
    <property type="project" value="UniProtKB"/>
</dbReference>
<dbReference type="GO" id="GO:0017056">
    <property type="term" value="F:structural constituent of nuclear pore"/>
    <property type="evidence" value="ECO:0000318"/>
    <property type="project" value="GO_Central"/>
</dbReference>
<dbReference type="GO" id="GO:0043130">
    <property type="term" value="F:ubiquitin binding"/>
    <property type="evidence" value="ECO:0000314"/>
    <property type="project" value="UniProtKB"/>
</dbReference>
<dbReference type="GO" id="GO:0007166">
    <property type="term" value="P:cell surface receptor signaling pathway"/>
    <property type="evidence" value="ECO:0000314"/>
    <property type="project" value="UniProtKB"/>
</dbReference>
<dbReference type="GO" id="GO:0090398">
    <property type="term" value="P:cellular senescence"/>
    <property type="evidence" value="ECO:0007669"/>
    <property type="project" value="Ensembl"/>
</dbReference>
<dbReference type="GO" id="GO:0098534">
    <property type="term" value="P:centriole assembly"/>
    <property type="evidence" value="ECO:0000315"/>
    <property type="project" value="UniProtKB"/>
</dbReference>
<dbReference type="GO" id="GO:0007098">
    <property type="term" value="P:centrosome cycle"/>
    <property type="evidence" value="ECO:0000315"/>
    <property type="project" value="UniProtKB"/>
</dbReference>
<dbReference type="GO" id="GO:0007100">
    <property type="term" value="P:mitotic centrosome separation"/>
    <property type="evidence" value="ECO:0000315"/>
    <property type="project" value="UniProtKB"/>
</dbReference>
<dbReference type="GO" id="GO:0007080">
    <property type="term" value="P:mitotic metaphase chromosome alignment"/>
    <property type="evidence" value="ECO:0000315"/>
    <property type="project" value="UniProtKB"/>
</dbReference>
<dbReference type="GO" id="GO:0051028">
    <property type="term" value="P:mRNA transport"/>
    <property type="evidence" value="ECO:0007669"/>
    <property type="project" value="UniProtKB-KW"/>
</dbReference>
<dbReference type="GO" id="GO:0043066">
    <property type="term" value="P:negative regulation of apoptotic process"/>
    <property type="evidence" value="ECO:0000314"/>
    <property type="project" value="UniProtKB"/>
</dbReference>
<dbReference type="GO" id="GO:0008285">
    <property type="term" value="P:negative regulation of cell population proliferation"/>
    <property type="evidence" value="ECO:0000314"/>
    <property type="project" value="UniProtKB"/>
</dbReference>
<dbReference type="GO" id="GO:0042059">
    <property type="term" value="P:negative regulation of epidermal growth factor receptor signaling pathway"/>
    <property type="evidence" value="ECO:0007669"/>
    <property type="project" value="Ensembl"/>
</dbReference>
<dbReference type="GO" id="GO:0043069">
    <property type="term" value="P:negative regulation of programmed cell death"/>
    <property type="evidence" value="ECO:0000314"/>
    <property type="project" value="UniProtKB"/>
</dbReference>
<dbReference type="GO" id="GO:0046580">
    <property type="term" value="P:negative regulation of Ras protein signal transduction"/>
    <property type="evidence" value="ECO:0007669"/>
    <property type="project" value="Ensembl"/>
</dbReference>
<dbReference type="GO" id="GO:0006913">
    <property type="term" value="P:nucleocytoplasmic transport"/>
    <property type="evidence" value="ECO:0000303"/>
    <property type="project" value="ComplexPortal"/>
</dbReference>
<dbReference type="GO" id="GO:0043123">
    <property type="term" value="P:positive regulation of canonical NF-kappaB signal transduction"/>
    <property type="evidence" value="ECO:0000314"/>
    <property type="project" value="UniProtKB"/>
</dbReference>
<dbReference type="GO" id="GO:0046601">
    <property type="term" value="P:positive regulation of centriole replication"/>
    <property type="evidence" value="ECO:0000315"/>
    <property type="project" value="UniProtKB"/>
</dbReference>
<dbReference type="GO" id="GO:0045893">
    <property type="term" value="P:positive regulation of DNA-templated transcription"/>
    <property type="evidence" value="ECO:0000314"/>
    <property type="project" value="UniProtKB"/>
</dbReference>
<dbReference type="GO" id="GO:0045742">
    <property type="term" value="P:positive regulation of epidermal growth factor receptor signaling pathway"/>
    <property type="evidence" value="ECO:0000303"/>
    <property type="project" value="UniProtKB"/>
</dbReference>
<dbReference type="GO" id="GO:1903438">
    <property type="term" value="P:positive regulation of mitotic cytokinetic process"/>
    <property type="evidence" value="ECO:0000315"/>
    <property type="project" value="UniProtKB"/>
</dbReference>
<dbReference type="GO" id="GO:0045840">
    <property type="term" value="P:positive regulation of mitotic nuclear division"/>
    <property type="evidence" value="ECO:0000315"/>
    <property type="project" value="UniProtKB"/>
</dbReference>
<dbReference type="GO" id="GO:1904781">
    <property type="term" value="P:positive regulation of protein localization to centrosome"/>
    <property type="evidence" value="ECO:0000315"/>
    <property type="project" value="UniProtKB"/>
</dbReference>
<dbReference type="GO" id="GO:0006606">
    <property type="term" value="P:protein import into nucleus"/>
    <property type="evidence" value="ECO:0000318"/>
    <property type="project" value="GO_Central"/>
</dbReference>
<dbReference type="GO" id="GO:0060236">
    <property type="term" value="P:regulation of mitotic spindle organization"/>
    <property type="evidence" value="ECO:0000315"/>
    <property type="project" value="UniProtKB"/>
</dbReference>
<dbReference type="GO" id="GO:0046578">
    <property type="term" value="P:regulation of Ras protein signal transduction"/>
    <property type="evidence" value="ECO:0000303"/>
    <property type="project" value="UniProtKB"/>
</dbReference>
<dbReference type="GO" id="GO:0009966">
    <property type="term" value="P:regulation of signal transduction"/>
    <property type="evidence" value="ECO:0000303"/>
    <property type="project" value="UniProtKB"/>
</dbReference>
<dbReference type="GO" id="GO:0006405">
    <property type="term" value="P:RNA export from nucleus"/>
    <property type="evidence" value="ECO:0000318"/>
    <property type="project" value="GO_Central"/>
</dbReference>
<dbReference type="FunFam" id="1.20.5.170:FF:000045">
    <property type="entry name" value="nuclear pore glycoprotein p62"/>
    <property type="match status" value="1"/>
</dbReference>
<dbReference type="Gene3D" id="1.20.5.170">
    <property type="match status" value="1"/>
</dbReference>
<dbReference type="InterPro" id="IPR026010">
    <property type="entry name" value="NSP1/NUP62"/>
</dbReference>
<dbReference type="InterPro" id="IPR007758">
    <property type="entry name" value="Nucleoporin_NSP1_C"/>
</dbReference>
<dbReference type="PANTHER" id="PTHR12084:SF0">
    <property type="entry name" value="NUCLEAR PORE GLYCOPROTEIN P62"/>
    <property type="match status" value="1"/>
</dbReference>
<dbReference type="PANTHER" id="PTHR12084">
    <property type="entry name" value="NUCLEAR PORE GLYCOPROTEIN P62-RELATED"/>
    <property type="match status" value="1"/>
</dbReference>
<dbReference type="Pfam" id="PF05064">
    <property type="entry name" value="Nsp1_C"/>
    <property type="match status" value="1"/>
</dbReference>
<feature type="initiator methionine" description="Removed" evidence="18 21">
    <location>
        <position position="1"/>
    </location>
</feature>
<feature type="chain" id="PRO_0000204880" description="Nuclear pore glycoprotein p62">
    <location>
        <begin position="2"/>
        <end position="522"/>
    </location>
</feature>
<feature type="repeat" description="1">
    <location>
        <begin position="6"/>
        <end position="7"/>
    </location>
</feature>
<feature type="repeat" description="2">
    <location>
        <begin position="44"/>
        <end position="45"/>
    </location>
</feature>
<feature type="repeat" description="3">
    <location>
        <begin position="76"/>
        <end position="77"/>
    </location>
</feature>
<feature type="repeat" description="4">
    <location>
        <begin position="114"/>
        <end position="115"/>
    </location>
</feature>
<feature type="repeat" description="5">
    <location>
        <begin position="142"/>
        <end position="143"/>
    </location>
</feature>
<feature type="region of interest" description="5 X 2 AA repeats of F-G">
    <location>
        <begin position="6"/>
        <end position="143"/>
    </location>
</feature>
<feature type="region of interest" description="Disordered" evidence="4">
    <location>
        <begin position="169"/>
        <end position="215"/>
    </location>
</feature>
<feature type="region of interest" description="Disordered" evidence="4">
    <location>
        <begin position="260"/>
        <end position="288"/>
    </location>
</feature>
<feature type="region of interest" description="Required for centrosome localization" evidence="15">
    <location>
        <begin position="328"/>
        <end position="458"/>
    </location>
</feature>
<feature type="coiled-coil region" evidence="3">
    <location>
        <begin position="328"/>
        <end position="458"/>
    </location>
</feature>
<feature type="compositionally biased region" description="Polar residues" evidence="4">
    <location>
        <begin position="169"/>
        <end position="179"/>
    </location>
</feature>
<feature type="compositionally biased region" description="Low complexity" evidence="4">
    <location>
        <begin position="180"/>
        <end position="215"/>
    </location>
</feature>
<feature type="compositionally biased region" description="Low complexity" evidence="4">
    <location>
        <begin position="262"/>
        <end position="288"/>
    </location>
</feature>
<feature type="modified residue" description="N-acetylserine" evidence="18 21">
    <location>
        <position position="2"/>
    </location>
</feature>
<feature type="modified residue" description="Phosphoserine" evidence="19 20 22">
    <location>
        <position position="408"/>
    </location>
</feature>
<feature type="modified residue" description="Phosphoserine" evidence="22">
    <location>
        <position position="418"/>
    </location>
</feature>
<feature type="glycosylation site" description="O-linked (GlcNAc) threonine" evidence="1">
    <location>
        <position position="373"/>
    </location>
</feature>
<feature type="glycosylation site" description="O-linked (GlcNAc) serine" evidence="1">
    <location>
        <position position="468"/>
    </location>
</feature>
<feature type="disulfide bond" description="Interchain (with NUP155)" evidence="1">
    <location>
        <position position="475"/>
    </location>
</feature>
<feature type="disulfide bond" description="Interchain (with NUP155)" evidence="1">
    <location>
        <position position="506"/>
    </location>
</feature>
<feature type="sequence variant" id="VAR_028064" description="In dbSNP:rs3745489.">
    <original>G</original>
    <variation>S</variation>
    <location>
        <position position="139"/>
    </location>
</feature>
<feature type="sequence variant" id="VAR_013467" description="In dbSNP:rs2290772.">
    <original>A</original>
    <variation>S</variation>
    <location>
        <position position="233"/>
    </location>
</feature>
<feature type="sequence variant" id="VAR_028065" description="In dbSNP:rs1062798." evidence="6 8 10">
    <original>S</original>
    <variation>T</variation>
    <location>
        <position position="283"/>
    </location>
</feature>
<feature type="sequence variant" id="VAR_034904" description="In SNDI; dbSNP:rs121917865." evidence="7">
    <original>Q</original>
    <variation>P</variation>
    <location>
        <position position="391"/>
    </location>
</feature>
<feature type="sequence conflict" description="In Ref. 1; CAA41411." evidence="17" ref="1">
    <original>SG</original>
    <variation>RA</variation>
    <location>
        <begin position="418"/>
        <end position="419"/>
    </location>
</feature>
<feature type="sequence conflict" description="In Ref. 1; CAA41411." evidence="17" ref="1">
    <original>E</original>
    <variation>Q</variation>
    <location>
        <position position="431"/>
    </location>
</feature>
<feature type="sequence conflict" description="In Ref. 1; CAA41411." evidence="17" ref="1">
    <original>E</original>
    <variation>V</variation>
    <location>
        <position position="507"/>
    </location>
</feature>
<comment type="function">
    <text evidence="10 15">Essential component of the nuclear pore complex (PubMed:1915414). The N-terminal is probably involved in nucleocytoplasmic transport (PubMed:1915414). The C-terminal is involved in protein-protein interaction probably via coiled-coil formation, promotes its association with centrosomes and may function in anchorage of p62 to the pore complex (PubMed:1915414, PubMed:24107630). Plays a role in mitotic cell cycle progression by regulating centrosome segregation, centriole maturation and spindle orientation (PubMed:24107630). It might be involved in protein recruitment to the centrosome after nuclear breakdown (PubMed:24107630).</text>
</comment>
<comment type="subunit">
    <text evidence="2 9 11 12 14 15 16">Component of the p62 complex, a complex at least composed of NUP62, NUP54, and NUP58 (By similarity). Interacts with NUP88 (PubMed:30543681). Interacts with NUTF2 (By similarity). Interacts with HIKESHI (PubMed:22541429). Interacts with OSBPL8 (PubMed:21698267). Interacts with CAPG (PubMed:18266911). Interacts with SAS6 and TUBG1 at the centrosome (PubMed:24107630). Interacts with MCM3AP isoform GANP (PubMed:23652018).</text>
</comment>
<comment type="subunit">
    <text evidence="13">(Microbial infection) Interacts with Epstein-barr virus BGLF4; this interaction allows BGLF4 nuclear entry.</text>
</comment>
<comment type="interaction">
    <interactant intactId="EBI-347978">
        <id>P37198</id>
    </interactant>
    <interactant intactId="EBI-743598">
        <id>Q9NYB9</id>
        <label>ABI2</label>
    </interactant>
    <organismsDiffer>false</organismsDiffer>
    <experiments>6</experiments>
</comment>
<comment type="interaction">
    <interactant intactId="EBI-347978">
        <id>P37198</id>
    </interactant>
    <interactant intactId="EBI-77818">
        <id>Q13444</id>
        <label>ADAM15</label>
    </interactant>
    <organismsDiffer>false</organismsDiffer>
    <experiments>3</experiments>
</comment>
<comment type="interaction">
    <interactant intactId="EBI-347978">
        <id>P37198</id>
    </interactant>
    <interactant intactId="EBI-3925742">
        <id>Q8TD06</id>
        <label>AGR3</label>
    </interactant>
    <organismsDiffer>false</organismsDiffer>
    <experiments>6</experiments>
</comment>
<comment type="interaction">
    <interactant intactId="EBI-347978">
        <id>P37198</id>
    </interactant>
    <interactant intactId="EBI-638194">
        <id>P53365</id>
        <label>ARFIP2</label>
    </interactant>
    <organismsDiffer>false</organismsDiffer>
    <experiments>3</experiments>
</comment>
<comment type="interaction">
    <interactant intactId="EBI-347978">
        <id>P37198</id>
    </interactant>
    <interactant intactId="EBI-708350">
        <id>O15265</id>
        <label>ATXN7</label>
    </interactant>
    <organismsDiffer>false</organismsDiffer>
    <experiments>2</experiments>
</comment>
<comment type="interaction">
    <interactant intactId="EBI-347978">
        <id>P37198</id>
    </interactant>
    <interactant intactId="EBI-10227494">
        <id>Q12934</id>
        <label>BFSP1</label>
    </interactant>
    <organismsDiffer>false</organismsDiffer>
    <experiments>3</experiments>
</comment>
<comment type="interaction">
    <interactant intactId="EBI-347978">
        <id>P37198</id>
    </interactant>
    <interactant intactId="EBI-12123320">
        <id>Q12934-2</id>
        <label>BFSP1</label>
    </interactant>
    <organismsDiffer>false</organismsDiffer>
    <experiments>3</experiments>
</comment>
<comment type="interaction">
    <interactant intactId="EBI-347978">
        <id>P37198</id>
    </interactant>
    <interactant intactId="EBI-465781">
        <id>Q9UL45</id>
        <label>BLOC1S6</label>
    </interactant>
    <organismsDiffer>false</organismsDiffer>
    <experiments>6</experiments>
</comment>
<comment type="interaction">
    <interactant intactId="EBI-347978">
        <id>P37198</id>
    </interactant>
    <interactant intactId="EBI-725606">
        <id>Q9NWQ9</id>
        <label>C14orf119</label>
    </interactant>
    <organismsDiffer>false</organismsDiffer>
    <experiments>5</experiments>
</comment>
<comment type="interaction">
    <interactant intactId="EBI-347978">
        <id>P37198</id>
    </interactant>
    <interactant intactId="EBI-747505">
        <id>Q8TAB5</id>
        <label>C1orf216</label>
    </interactant>
    <organismsDiffer>false</organismsDiffer>
    <experiments>6</experiments>
</comment>
<comment type="interaction">
    <interactant intactId="EBI-347978">
        <id>P37198</id>
    </interactant>
    <interactant intactId="EBI-3893101">
        <id>Q969G5</id>
        <label>CAVIN3</label>
    </interactant>
    <organismsDiffer>false</organismsDiffer>
    <experiments>3</experiments>
</comment>
<comment type="interaction">
    <interactant intactId="EBI-347978">
        <id>P37198</id>
    </interactant>
    <interactant intactId="EBI-2836982">
        <id>Q6ZUS5</id>
        <label>CCDC121</label>
    </interactant>
    <organismsDiffer>false</organismsDiffer>
    <experiments>4</experiments>
</comment>
<comment type="interaction">
    <interactant intactId="EBI-347978">
        <id>P37198</id>
    </interactant>
    <interactant intactId="EBI-10749669">
        <id>Q8IYE0</id>
        <label>CCDC146</label>
    </interactant>
    <organismsDiffer>false</organismsDiffer>
    <experiments>5</experiments>
</comment>
<comment type="interaction">
    <interactant intactId="EBI-347978">
        <id>P37198</id>
    </interactant>
    <interactant intactId="EBI-10247802">
        <id>Q8IYE0-2</id>
        <label>CCDC146</label>
    </interactant>
    <organismsDiffer>false</organismsDiffer>
    <experiments>3</experiments>
</comment>
<comment type="interaction">
    <interactant intactId="EBI-347978">
        <id>P37198</id>
    </interactant>
    <interactant intactId="EBI-10269342">
        <id>Q8NCX0</id>
        <label>CCDC150</label>
    </interactant>
    <organismsDiffer>false</organismsDiffer>
    <experiments>3</experiments>
</comment>
<comment type="interaction">
    <interactant intactId="EBI-347978">
        <id>P37198</id>
    </interactant>
    <interactant intactId="EBI-949834">
        <id>Q8TD31</id>
        <label>CCHCR1</label>
    </interactant>
    <organismsDiffer>false</organismsDiffer>
    <experiments>3</experiments>
</comment>
<comment type="interaction">
    <interactant intactId="EBI-347978">
        <id>P37198</id>
    </interactant>
    <interactant intactId="EBI-10175300">
        <id>Q8TD31-3</id>
        <label>CCHCR1</label>
    </interactant>
    <organismsDiffer>false</organismsDiffer>
    <experiments>6</experiments>
</comment>
<comment type="interaction">
    <interactant intactId="EBI-347978">
        <id>P37198</id>
    </interactant>
    <interactant intactId="EBI-2515234">
        <id>Q71F23</id>
        <label>CENPU</label>
    </interactant>
    <organismsDiffer>false</organismsDiffer>
    <experiments>4</experiments>
</comment>
<comment type="interaction">
    <interactant intactId="EBI-347978">
        <id>P37198</id>
    </interactant>
    <interactant intactId="EBI-10181988">
        <id>Q8IYX8-2</id>
        <label>CEP57L1</label>
    </interactant>
    <organismsDiffer>false</organismsDiffer>
    <experiments>3</experiments>
</comment>
<comment type="interaction">
    <interactant intactId="EBI-347978">
        <id>P37198</id>
    </interactant>
    <interactant intactId="EBI-713677">
        <id>Q9UGL9</id>
        <label>CRCT1</label>
    </interactant>
    <organismsDiffer>false</organismsDiffer>
    <experiments>6</experiments>
</comment>
<comment type="interaction">
    <interactant intactId="EBI-347978">
        <id>P37198</id>
    </interactant>
    <interactant intactId="EBI-12082590">
        <id>Q6W0C5</id>
        <label>DPPA3</label>
    </interactant>
    <organismsDiffer>false</organismsDiffer>
    <experiments>3</experiments>
</comment>
<comment type="interaction">
    <interactant intactId="EBI-347978">
        <id>P37198</id>
    </interactant>
    <interactant intactId="EBI-10241443">
        <id>Q494R4</id>
        <label>DRC12</label>
    </interactant>
    <organismsDiffer>false</organismsDiffer>
    <experiments>3</experiments>
</comment>
<comment type="interaction">
    <interactant intactId="EBI-347978">
        <id>P37198</id>
    </interactant>
    <interactant intactId="EBI-740402">
        <id>O60941</id>
        <label>DTNB</label>
    </interactant>
    <organismsDiffer>false</organismsDiffer>
    <experiments>5</experiments>
</comment>
<comment type="interaction">
    <interactant intactId="EBI-347978">
        <id>P37198</id>
    </interactant>
    <interactant intactId="EBI-11984733">
        <id>O60941-5</id>
        <label>DTNB</label>
    </interactant>
    <organismsDiffer>false</organismsDiffer>
    <experiments>3</experiments>
</comment>
<comment type="interaction">
    <interactant intactId="EBI-347978">
        <id>P37198</id>
    </interactant>
    <interactant intactId="EBI-704216">
        <id>P05413</id>
        <label>FABP3</label>
    </interactant>
    <organismsDiffer>false</organismsDiffer>
    <experiments>7</experiments>
</comment>
<comment type="interaction">
    <interactant intactId="EBI-347978">
        <id>P37198</id>
    </interactant>
    <interactant intactId="EBI-2514791">
        <id>Q96CS2</id>
        <label>HAUS1</label>
    </interactant>
    <organismsDiffer>false</organismsDiffer>
    <experiments>3</experiments>
</comment>
<comment type="interaction">
    <interactant intactId="EBI-347978">
        <id>P37198</id>
    </interactant>
    <interactant intactId="EBI-16429135">
        <id>A0A0S2Z4Q4</id>
        <label>HGS</label>
    </interactant>
    <organismsDiffer>false</organismsDiffer>
    <experiments>3</experiments>
</comment>
<comment type="interaction">
    <interactant intactId="EBI-347978">
        <id>P37198</id>
    </interactant>
    <interactant intactId="EBI-740220">
        <id>O14964</id>
        <label>HGS</label>
    </interactant>
    <organismsDiffer>false</organismsDiffer>
    <experiments>3</experiments>
</comment>
<comment type="interaction">
    <interactant intactId="EBI-347978">
        <id>P37198</id>
    </interactant>
    <interactant intactId="EBI-2556750">
        <id>Q03933</id>
        <label>HSF2</label>
    </interactant>
    <organismsDiffer>false</organismsDiffer>
    <experiments>5</experiments>
</comment>
<comment type="interaction">
    <interactant intactId="EBI-347978">
        <id>P37198</id>
    </interactant>
    <interactant intactId="EBI-10223348">
        <id>Q03933-2</id>
        <label>HSF2</label>
    </interactant>
    <organismsDiffer>false</organismsDiffer>
    <experiments>3</experiments>
</comment>
<comment type="interaction">
    <interactant intactId="EBI-347978">
        <id>P37198</id>
    </interactant>
    <interactant intactId="EBI-12056251">
        <id>Q9ULV5-2</id>
        <label>HSF4</label>
    </interactant>
    <organismsDiffer>false</organismsDiffer>
    <experiments>3</experiments>
</comment>
<comment type="interaction">
    <interactant intactId="EBI-347978">
        <id>P37198</id>
    </interactant>
    <interactant intactId="EBI-744203">
        <id>Q8IY31</id>
        <label>IFT20</label>
    </interactant>
    <organismsDiffer>false</organismsDiffer>
    <experiments>3</experiments>
</comment>
<comment type="interaction">
    <interactant intactId="EBI-347978">
        <id>P37198</id>
    </interactant>
    <interactant intactId="EBI-2557212">
        <id>Q70UQ0</id>
        <label>IKBIP</label>
    </interactant>
    <organismsDiffer>false</organismsDiffer>
    <experiments>3</experiments>
</comment>
<comment type="interaction">
    <interactant intactId="EBI-347978">
        <id>P37198</id>
    </interactant>
    <interactant intactId="EBI-1047335">
        <id>Q9H1K1</id>
        <label>ISCU</label>
    </interactant>
    <organismsDiffer>false</organismsDiffer>
    <experiments>6</experiments>
</comment>
<comment type="interaction">
    <interactant intactId="EBI-347978">
        <id>P37198</id>
    </interactant>
    <interactant intactId="EBI-740244">
        <id>Q7Z3B3</id>
        <label>KANSL1</label>
    </interactant>
    <organismsDiffer>false</organismsDiffer>
    <experiments>4</experiments>
</comment>
<comment type="interaction">
    <interactant intactId="EBI-347978">
        <id>P37198</id>
    </interactant>
    <interactant intactId="EBI-2125614">
        <id>Q9BVG8</id>
        <label>KIFC3</label>
    </interactant>
    <organismsDiffer>false</organismsDiffer>
    <experiments>3</experiments>
</comment>
<comment type="interaction">
    <interactant intactId="EBI-347978">
        <id>P37198</id>
    </interactant>
    <interactant intactId="EBI-10247181">
        <id>Q5THT1</id>
        <label>KLHL32</label>
    </interactant>
    <organismsDiffer>false</organismsDiffer>
    <experiments>3</experiments>
</comment>
<comment type="interaction">
    <interactant intactId="EBI-347978">
        <id>P37198</id>
    </interactant>
    <interactant intactId="EBI-349938">
        <id>P52292</id>
        <label>KPNA2</label>
    </interactant>
    <organismsDiffer>false</organismsDiffer>
    <experiments>3</experiments>
</comment>
<comment type="interaction">
    <interactant intactId="EBI-347978">
        <id>P37198</id>
    </interactant>
    <interactant intactId="EBI-298429">
        <id>P04264</id>
        <label>KRT1</label>
    </interactant>
    <organismsDiffer>false</organismsDiffer>
    <experiments>7</experiments>
</comment>
<comment type="interaction">
    <interactant intactId="EBI-347978">
        <id>P37198</id>
    </interactant>
    <interactant intactId="EBI-742094">
        <id>P35900</id>
        <label>KRT20</label>
    </interactant>
    <organismsDiffer>false</organismsDiffer>
    <experiments>7</experiments>
</comment>
<comment type="interaction">
    <interactant intactId="EBI-347978">
        <id>P37198</id>
    </interactant>
    <interactant intactId="EBI-2430095">
        <id>P12035</id>
        <label>KRT3</label>
    </interactant>
    <organismsDiffer>false</organismsDiffer>
    <experiments>3</experiments>
</comment>
<comment type="interaction">
    <interactant intactId="EBI-347978">
        <id>P37198</id>
    </interactant>
    <interactant intactId="EBI-702198">
        <id>P02538</id>
        <label>KRT6A</label>
    </interactant>
    <organismsDiffer>false</organismsDiffer>
    <experiments>3</experiments>
</comment>
<comment type="interaction">
    <interactant intactId="EBI-347978">
        <id>P37198</id>
    </interactant>
    <interactant intactId="EBI-740907">
        <id>P04259</id>
        <label>KRT6B</label>
    </interactant>
    <organismsDiffer>false</organismsDiffer>
    <experiments>3</experiments>
</comment>
<comment type="interaction">
    <interactant intactId="EBI-347978">
        <id>P37198</id>
    </interactant>
    <interactant intactId="EBI-2949715">
        <id>O95678</id>
        <label>KRT75</label>
    </interactant>
    <organismsDiffer>false</organismsDiffer>
    <experiments>5</experiments>
</comment>
<comment type="interaction">
    <interactant intactId="EBI-347978">
        <id>P37198</id>
    </interactant>
    <interactant intactId="EBI-739696">
        <id>P25791</id>
        <label>LMO2</label>
    </interactant>
    <organismsDiffer>false</organismsDiffer>
    <experiments>3</experiments>
</comment>
<comment type="interaction">
    <interactant intactId="EBI-347978">
        <id>P37198</id>
    </interactant>
    <interactant intactId="EBI-739832">
        <id>Q8TBB1</id>
        <label>LNX1</label>
    </interactant>
    <organismsDiffer>false</organismsDiffer>
    <experiments>3</experiments>
</comment>
<comment type="interaction">
    <interactant intactId="EBI-347978">
        <id>P37198</id>
    </interactant>
    <interactant intactId="EBI-741574">
        <id>Q9BW11</id>
        <label>MXD3</label>
    </interactant>
    <organismsDiffer>false</organismsDiffer>
    <experiments>3</experiments>
</comment>
<comment type="interaction">
    <interactant intactId="EBI-347978">
        <id>P37198</id>
    </interactant>
    <interactant intactId="EBI-7950783">
        <id>Q96JP2</id>
        <label>MYO15B</label>
    </interactant>
    <organismsDiffer>false</organismsDiffer>
    <experiments>3</experiments>
</comment>
<comment type="interaction">
    <interactant intactId="EBI-347978">
        <id>P37198</id>
    </interactant>
    <interactant intactId="EBI-741048">
        <id>Q7Z3B4</id>
        <label>NUP54</label>
    </interactant>
    <organismsDiffer>false</organismsDiffer>
    <experiments>14</experiments>
</comment>
<comment type="interaction">
    <interactant intactId="EBI-347978">
        <id>P37198</id>
    </interactant>
    <interactant intactId="EBI-2811583">
        <id>Q9BVL2</id>
        <label>NUP58</label>
    </interactant>
    <organismsDiffer>false</organismsDiffer>
    <experiments>9</experiments>
</comment>
<comment type="interaction">
    <interactant intactId="EBI-347978">
        <id>P37198</id>
    </interactant>
    <interactant intactId="EBI-726178">
        <id>Q99567</id>
        <label>NUP88</label>
    </interactant>
    <organismsDiffer>false</organismsDiffer>
    <experiments>8</experiments>
</comment>
<comment type="interaction">
    <interactant intactId="EBI-347978">
        <id>P37198</id>
    </interactant>
    <interactant intactId="EBI-591778">
        <id>P61970</id>
        <label>NUTF2</label>
    </interactant>
    <organismsDiffer>false</organismsDiffer>
    <experiments>7</experiments>
</comment>
<comment type="interaction">
    <interactant intactId="EBI-347978">
        <id>P37198</id>
    </interactant>
    <interactant intactId="EBI-398874">
        <id>Q9UBU9</id>
        <label>NXF1</label>
    </interactant>
    <organismsDiffer>false</organismsDiffer>
    <experiments>11</experiments>
</comment>
<comment type="interaction">
    <interactant intactId="EBI-347978">
        <id>P37198</id>
    </interactant>
    <interactant intactId="EBI-536879">
        <id>O43482</id>
        <label>OIP5</label>
    </interactant>
    <organismsDiffer>false</organismsDiffer>
    <experiments>6</experiments>
</comment>
<comment type="interaction">
    <interactant intactId="EBI-347978">
        <id>P37198</id>
    </interactant>
    <interactant intactId="EBI-11960139">
        <id>Q7L8S5</id>
        <label>OTUD6A</label>
    </interactant>
    <organismsDiffer>false</organismsDiffer>
    <experiments>3</experiments>
</comment>
<comment type="interaction">
    <interactant intactId="EBI-347978">
        <id>P37198</id>
    </interactant>
    <interactant intactId="EBI-448407">
        <id>Q9HAT8</id>
        <label>PELI2</label>
    </interactant>
    <organismsDiffer>false</organismsDiffer>
    <experiments>3</experiments>
</comment>
<comment type="interaction">
    <interactant intactId="EBI-347978">
        <id>P37198</id>
    </interactant>
    <interactant intactId="EBI-745085">
        <id>Q96BD5</id>
        <label>PHF21A</label>
    </interactant>
    <organismsDiffer>false</organismsDiffer>
    <experiments>8</experiments>
</comment>
<comment type="interaction">
    <interactant intactId="EBI-347978">
        <id>P37198</id>
    </interactant>
    <interactant intactId="EBI-714158">
        <id>Q13526</id>
        <label>PIN1</label>
    </interactant>
    <organismsDiffer>false</organismsDiffer>
    <experiments>6</experiments>
</comment>
<comment type="interaction">
    <interactant intactId="EBI-347978">
        <id>P37198</id>
    </interactant>
    <interactant intactId="EBI-455078">
        <id>Q969G3</id>
        <label>SMARCE1</label>
    </interactant>
    <organismsDiffer>false</organismsDiffer>
    <experiments>3</experiments>
</comment>
<comment type="interaction">
    <interactant intactId="EBI-347978">
        <id>P37198</id>
    </interactant>
    <interactant intactId="EBI-749483">
        <id>O75971</id>
        <label>SNAPC5</label>
    </interactant>
    <organismsDiffer>false</organismsDiffer>
    <experiments>3</experiments>
</comment>
<comment type="interaction">
    <interactant intactId="EBI-347978">
        <id>P37198</id>
    </interactant>
    <interactant intactId="EBI-10172867">
        <id>A1L4H1</id>
        <label>SSC5D</label>
    </interactant>
    <organismsDiffer>false</organismsDiffer>
    <experiments>6</experiments>
</comment>
<comment type="interaction">
    <interactant intactId="EBI-347978">
        <id>P37198</id>
    </interactant>
    <interactant intactId="EBI-3921347">
        <id>P51687</id>
        <label>SUOX</label>
    </interactant>
    <organismsDiffer>false</organismsDiffer>
    <experiments>6</experiments>
</comment>
<comment type="interaction">
    <interactant intactId="EBI-347978">
        <id>P37198</id>
    </interactant>
    <interactant intactId="EBI-741515">
        <id>Q9NVV9</id>
        <label>THAP1</label>
    </interactant>
    <organismsDiffer>false</organismsDiffer>
    <experiments>12</experiments>
</comment>
<comment type="interaction">
    <interactant intactId="EBI-347978">
        <id>P37198</id>
    </interactant>
    <interactant intactId="EBI-12117860">
        <id>Q04727-2</id>
        <label>TLE4</label>
    </interactant>
    <organismsDiffer>false</organismsDiffer>
    <experiments>3</experiments>
</comment>
<comment type="interaction">
    <interactant intactId="EBI-347978">
        <id>P37198</id>
    </interactant>
    <interactant intactId="EBI-11059915">
        <id>Q8N7C3</id>
        <label>TRIML2</label>
    </interactant>
    <organismsDiffer>false</organismsDiffer>
    <experiments>3</experiments>
</comment>
<comment type="interaction">
    <interactant intactId="EBI-347978">
        <id>P37198</id>
    </interactant>
    <interactant intactId="EBI-359793">
        <id>P40222</id>
        <label>TXLNA</label>
    </interactant>
    <organismsDiffer>false</organismsDiffer>
    <experiments>8</experiments>
</comment>
<comment type="interaction">
    <interactant intactId="EBI-347978">
        <id>P37198</id>
    </interactant>
    <interactant intactId="EBI-594644">
        <id>P10599</id>
        <label>TXN</label>
    </interactant>
    <organismsDiffer>false</organismsDiffer>
    <experiments>3</experiments>
</comment>
<comment type="interaction">
    <interactant intactId="EBI-347978">
        <id>P37198</id>
    </interactant>
    <interactant intactId="EBI-739895">
        <id>Q8N6Y0</id>
        <label>USHBP1</label>
    </interactant>
    <organismsDiffer>false</organismsDiffer>
    <experiments>3</experiments>
</comment>
<comment type="interaction">
    <interactant intactId="EBI-347978">
        <id>P37198</id>
    </interactant>
    <interactant intactId="EBI-712969">
        <id>Q9Y3C0</id>
        <label>WASHC3</label>
    </interactant>
    <organismsDiffer>false</organismsDiffer>
    <experiments>9</experiments>
</comment>
<comment type="interaction">
    <interactant intactId="EBI-347978">
        <id>P37198</id>
    </interactant>
    <interactant intactId="EBI-1022896">
        <id>Q96QU8</id>
        <label>XPO6</label>
    </interactant>
    <organismsDiffer>false</organismsDiffer>
    <experiments>3</experiments>
</comment>
<comment type="interaction">
    <interactant intactId="EBI-347978">
        <id>P37198</id>
    </interactant>
    <interactant intactId="EBI-10293124">
        <id>Q96QU8-2</id>
        <label>XPO6</label>
    </interactant>
    <organismsDiffer>false</organismsDiffer>
    <experiments>3</experiments>
</comment>
<comment type="interaction">
    <interactant intactId="EBI-347978">
        <id>P37198</id>
    </interactant>
    <interactant intactId="EBI-10249899">
        <id>Q9H614</id>
    </interactant>
    <organismsDiffer>false</organismsDiffer>
    <experiments>3</experiments>
</comment>
<comment type="interaction">
    <interactant intactId="EBI-347978">
        <id>P37198</id>
    </interactant>
    <interactant intactId="EBI-14033439">
        <id>E5LBS6</id>
        <label>ORF10</label>
    </interactant>
    <organismsDiffer>true</organismsDiffer>
    <experiments>2</experiments>
</comment>
<comment type="interaction">
    <interactant intactId="EBI-347978">
        <id>P37198</id>
    </interactant>
    <interactant intactId="EBI-6883946">
        <id>P10238</id>
        <label>UL54</label>
    </interactant>
    <organismsDiffer>true</organismsDiffer>
    <experiments>3</experiments>
</comment>
<comment type="subcellular location">
    <subcellularLocation>
        <location evidence="10">Nucleus</location>
        <location evidence="10">Nuclear pore complex</location>
    </subcellularLocation>
    <subcellularLocation>
        <location evidence="15">Cytoplasm</location>
        <location evidence="15">Cytoskeleton</location>
        <location evidence="15">Spindle pole</location>
    </subcellularLocation>
    <subcellularLocation>
        <location evidence="15">Nucleus envelope</location>
    </subcellularLocation>
    <subcellularLocation>
        <location evidence="5 15">Cytoplasm</location>
        <location evidence="5 15">Cytoskeleton</location>
        <location evidence="5 15">Microtubule organizing center</location>
        <location evidence="5 15">Centrosome</location>
    </subcellularLocation>
    <text evidence="10 15">Central region of the nuclear pore, within the transporter (PubMed:1915414). During mitotic cell division, it associates with the poles of the mitotic spindle (PubMed:24107630).</text>
</comment>
<comment type="domain">
    <text>Contains FG repeats.</text>
</comment>
<comment type="PTM">
    <text evidence="17">O-glycosylated. Contains about 10 N-acetylglucosamine side chain sites predicted for the entire protein, among which only one in the C-terminal.</text>
</comment>
<comment type="PTM">
    <text evidence="1">The inner channel of the NPC has a different redox environment from the cytoplasm and allows the formation of interchain disulfide bonds between some nucleoporins, the significant increase of these linkages upon oxidative stress reduces the permeability of the NPC.</text>
</comment>
<comment type="disease" evidence="7">
    <disease id="DI-01821">
        <name>Infantile striatonigral degeneration</name>
        <acronym>SNDI</acronym>
        <description>Neurological disorder characterized by symmetrical degeneration of the caudate nucleus, putamen, and occasionally the globus pallidus, with little involvement of the rest of the brain. The clinical features include developmental regression, choreoathetosis, dystonia, spasticity, dysphagia, failure to thrive, nystagmus, optic atrophy, and intellectual disability.</description>
        <dbReference type="MIM" id="271930"/>
    </disease>
    <text>The disease is caused by variants affecting the gene represented in this entry.</text>
</comment>
<comment type="similarity">
    <text evidence="17">Belongs to the nucleoporin NSP1/NUP62 family.</text>
</comment>
<evidence type="ECO:0000250" key="1"/>
<evidence type="ECO:0000250" key="2">
    <source>
        <dbReference type="UniProtKB" id="P17955"/>
    </source>
</evidence>
<evidence type="ECO:0000255" key="3"/>
<evidence type="ECO:0000256" key="4">
    <source>
        <dbReference type="SAM" id="MobiDB-lite"/>
    </source>
</evidence>
<evidence type="ECO:0000269" key="5">
    <source>
    </source>
</evidence>
<evidence type="ECO:0000269" key="6">
    <source>
    </source>
</evidence>
<evidence type="ECO:0000269" key="7">
    <source>
    </source>
</evidence>
<evidence type="ECO:0000269" key="8">
    <source>
    </source>
</evidence>
<evidence type="ECO:0000269" key="9">
    <source>
    </source>
</evidence>
<evidence type="ECO:0000269" key="10">
    <source>
    </source>
</evidence>
<evidence type="ECO:0000269" key="11">
    <source>
    </source>
</evidence>
<evidence type="ECO:0000269" key="12">
    <source>
    </source>
</evidence>
<evidence type="ECO:0000269" key="13">
    <source>
    </source>
</evidence>
<evidence type="ECO:0000269" key="14">
    <source>
    </source>
</evidence>
<evidence type="ECO:0000269" key="15">
    <source>
    </source>
</evidence>
<evidence type="ECO:0000269" key="16">
    <source>
    </source>
</evidence>
<evidence type="ECO:0000305" key="17"/>
<evidence type="ECO:0007744" key="18">
    <source>
    </source>
</evidence>
<evidence type="ECO:0007744" key="19">
    <source>
    </source>
</evidence>
<evidence type="ECO:0007744" key="20">
    <source>
    </source>
</evidence>
<evidence type="ECO:0007744" key="21">
    <source>
    </source>
</evidence>
<evidence type="ECO:0007744" key="22">
    <source>
    </source>
</evidence>
<name>NUP62_HUMAN</name>
<proteinExistence type="evidence at protein level"/>
<gene>
    <name type="primary">NUP62</name>
</gene>
<keyword id="KW-0002">3D-structure</keyword>
<keyword id="KW-0007">Acetylation</keyword>
<keyword id="KW-0175">Coiled coil</keyword>
<keyword id="KW-0963">Cytoplasm</keyword>
<keyword id="KW-0206">Cytoskeleton</keyword>
<keyword id="KW-0225">Disease variant</keyword>
<keyword id="KW-1015">Disulfide bond</keyword>
<keyword id="KW-0325">Glycoprotein</keyword>
<keyword id="KW-0945">Host-virus interaction</keyword>
<keyword id="KW-0509">mRNA transport</keyword>
<keyword id="KW-0906">Nuclear pore complex</keyword>
<keyword id="KW-0539">Nucleus</keyword>
<keyword id="KW-0597">Phosphoprotein</keyword>
<keyword id="KW-0653">Protein transport</keyword>
<keyword id="KW-1267">Proteomics identification</keyword>
<keyword id="KW-1185">Reference proteome</keyword>
<keyword id="KW-0677">Repeat</keyword>
<keyword id="KW-0811">Translocation</keyword>
<keyword id="KW-0813">Transport</keyword>